<comment type="function">
    <text evidence="3 4 5 6 7 10 11">Required for glutamatergic synaptic transmission (PubMed:10818169, PubMed:14762140, PubMed:14981253, PubMed:15371514, PubMed:9526004, PubMed:9870947). In AWB and AWC sensory neurons, required for the detection of preferred food sources, probably via glutamatergic neurotransmission from sensory neurons (PubMed:25009271). Negatively regulates the turning step of male mating behavior (PubMed:17611271).</text>
</comment>
<comment type="subcellular location">
    <subcellularLocation>
        <location evidence="12">Cell membrane</location>
        <topology evidence="12">Multi-pass membrane protein</topology>
    </subcellularLocation>
    <subcellularLocation>
        <location>Synapse</location>
    </subcellularLocation>
</comment>
<comment type="tissue specificity">
    <text evidence="9 11">Expressed in neurons of the pharynx and the extrapharyngeal nervous system. Highly expressed in male PHC sensory neurons (PubMed:28065609).</text>
</comment>
<comment type="developmental stage">
    <text evidence="9">Highly expressed in male PHC sensory neurons from the late L4 larval stage/young adult stage.</text>
</comment>
<comment type="disruption phenotype">
    <text evidence="7 8">Defective preference between different food odors (PubMed:25009271). Abnormal repetitive turning behavior during male mating (PubMed:17611271).</text>
</comment>
<comment type="similarity">
    <text evidence="12">Belongs to the major facilitator superfamily. Sodium/anion cotransporter family. VGLUT subfamily.</text>
</comment>
<proteinExistence type="evidence at transcript level"/>
<keyword id="KW-1003">Cell membrane</keyword>
<keyword id="KW-0325">Glycoprotein</keyword>
<keyword id="KW-0406">Ion transport</keyword>
<keyword id="KW-0472">Membrane</keyword>
<keyword id="KW-0532">Neurotransmitter transport</keyword>
<keyword id="KW-1185">Reference proteome</keyword>
<keyword id="KW-0915">Sodium</keyword>
<keyword id="KW-0739">Sodium transport</keyword>
<keyword id="KW-0769">Symport</keyword>
<keyword id="KW-0770">Synapse</keyword>
<keyword id="KW-0812">Transmembrane</keyword>
<keyword id="KW-1133">Transmembrane helix</keyword>
<keyword id="KW-0813">Transport</keyword>
<evidence type="ECO:0000255" key="1"/>
<evidence type="ECO:0000256" key="2">
    <source>
        <dbReference type="SAM" id="MobiDB-lite"/>
    </source>
</evidence>
<evidence type="ECO:0000269" key="3">
    <source>
    </source>
</evidence>
<evidence type="ECO:0000269" key="4">
    <source>
    </source>
</evidence>
<evidence type="ECO:0000269" key="5">
    <source>
    </source>
</evidence>
<evidence type="ECO:0000269" key="6">
    <source>
    </source>
</evidence>
<evidence type="ECO:0000269" key="7">
    <source>
    </source>
</evidence>
<evidence type="ECO:0000269" key="8">
    <source>
    </source>
</evidence>
<evidence type="ECO:0000269" key="9">
    <source>
    </source>
</evidence>
<evidence type="ECO:0000269" key="10">
    <source>
    </source>
</evidence>
<evidence type="ECO:0000269" key="11">
    <source>
    </source>
</evidence>
<evidence type="ECO:0000305" key="12"/>
<evidence type="ECO:0000312" key="13">
    <source>
        <dbReference type="WormBase" id="ZK512.6a"/>
    </source>
</evidence>
<reference key="1">
    <citation type="journal article" date="1994" name="Nature">
        <title>2.2 Mb of contiguous nucleotide sequence from chromosome III of C. elegans.</title>
        <authorList>
            <person name="Wilson R."/>
            <person name="Ainscough R."/>
            <person name="Anderson K."/>
            <person name="Baynes C."/>
            <person name="Berks M."/>
            <person name="Bonfield J."/>
            <person name="Burton J."/>
            <person name="Connell M."/>
            <person name="Copsey T."/>
            <person name="Cooper J."/>
            <person name="Coulson A."/>
            <person name="Craxton M."/>
            <person name="Dear S."/>
            <person name="Du Z."/>
            <person name="Durbin R."/>
            <person name="Favello A."/>
            <person name="Fraser A."/>
            <person name="Fulton L."/>
            <person name="Gardner A."/>
            <person name="Green P."/>
            <person name="Hawkins T."/>
            <person name="Hillier L."/>
            <person name="Jier M."/>
            <person name="Johnston L."/>
            <person name="Jones M."/>
            <person name="Kershaw J."/>
            <person name="Kirsten J."/>
            <person name="Laisster N."/>
            <person name="Latreille P."/>
            <person name="Lightning J."/>
            <person name="Lloyd C."/>
            <person name="Mortimore B."/>
            <person name="O'Callaghan M."/>
            <person name="Parsons J."/>
            <person name="Percy C."/>
            <person name="Rifken L."/>
            <person name="Roopra A."/>
            <person name="Saunders D."/>
            <person name="Shownkeen R."/>
            <person name="Sims M."/>
            <person name="Smaldon N."/>
            <person name="Smith A."/>
            <person name="Smith M."/>
            <person name="Sonnhammer E."/>
            <person name="Staden R."/>
            <person name="Sulston J."/>
            <person name="Thierry-Mieg J."/>
            <person name="Thomas K."/>
            <person name="Vaudin M."/>
            <person name="Vaughan K."/>
            <person name="Waterston R."/>
            <person name="Watson A."/>
            <person name="Weinstock L."/>
            <person name="Wilkinson-Sproat J."/>
            <person name="Wohldman P."/>
        </authorList>
    </citation>
    <scope>NUCLEOTIDE SEQUENCE [LARGE SCALE GENOMIC DNA]</scope>
    <source>
        <strain>Bristol N2</strain>
    </source>
</reference>
<reference key="2">
    <citation type="journal article" date="1998" name="Science">
        <title>Genome sequence of the nematode C. elegans: a platform for investigating biology.</title>
        <authorList>
            <consortium name="The C. elegans sequencing consortium"/>
        </authorList>
    </citation>
    <scope>NUCLEOTIDE SEQUENCE [LARGE SCALE GENOMIC DNA]</scope>
    <source>
        <strain>Bristol N2</strain>
    </source>
</reference>
<reference key="3">
    <citation type="journal article" date="1999" name="J. Neurosci.">
        <title>EAT-4, a homolog of a mammalian sodium-dependent inorganic phosphate cotransporter, is necessary for glutamatergic neurotransmission in caenorhabditis elegans.</title>
        <authorList>
            <person name="Lee R.Y.N."/>
            <person name="Sawin E.R."/>
            <person name="Chalfie M."/>
            <person name="Horvitz H.R."/>
            <person name="Avery L."/>
        </authorList>
    </citation>
    <scope>NUCLEOTIDE SEQUENCE [MRNA] OF 14-576</scope>
    <scope>FUNCTION</scope>
    <scope>TISSUE SPECIFICITY</scope>
    <source>
        <strain>Bristol N2</strain>
    </source>
</reference>
<reference key="4">
    <citation type="journal article" date="1998" name="J. Neurosci.">
        <title>G alphas-induced neurodegeneration in Caenorhabditis elegans.</title>
        <authorList>
            <person name="Berger A.J."/>
            <person name="Hart A.C."/>
            <person name="Kaplan J.M."/>
        </authorList>
    </citation>
    <scope>FUNCTION</scope>
</reference>
<reference key="5">
    <citation type="journal article" date="2000" name="J. Neurosci.">
        <title>Mutations of the caenorhabditis elegans brain-specific inorganic phosphate transporter eat-4 affect habituation of the tap-withdrawal response without affecting the response itself.</title>
        <authorList>
            <person name="Rankin C.H."/>
            <person name="Wicks S.R."/>
        </authorList>
    </citation>
    <scope>FUNCTION</scope>
</reference>
<reference key="6">
    <citation type="journal article" date="2004" name="J. Neurosci.">
        <title>Dopamine and glutamate control area-restricted search behavior in Caenorhabditis elegans.</title>
        <authorList>
            <person name="Hills T."/>
            <person name="Brockie P.J."/>
            <person name="Maricq A.V."/>
        </authorList>
    </citation>
    <scope>FUNCTION</scope>
</reference>
<reference key="7">
    <citation type="journal article" date="2004" name="J. Neurosci.">
        <title>Neuronal toxicity in Caenorhabditis elegans from an editing site mutant in glutamate receptor channels.</title>
        <authorList>
            <person name="Aronoff R."/>
            <person name="Mellem J.E."/>
            <person name="Maricq A.V."/>
            <person name="Sprengel R."/>
            <person name="Seeburg P.H."/>
        </authorList>
    </citation>
    <scope>FUNCTION</scope>
</reference>
<reference key="8">
    <citation type="journal article" date="2004" name="Proc. Natl. Acad. Sci. U.S.A.">
        <title>Clathrin-mediated endocytosis is required for compensatory regulation of GLR-1 glutamate receptors after activity blockade.</title>
        <authorList>
            <person name="Grunwald M.E."/>
            <person name="Mellem J.E."/>
            <person name="Strutz N."/>
            <person name="Maricq A.V."/>
            <person name="Kaplan J.M."/>
        </authorList>
    </citation>
    <scope>FUNCTION</scope>
</reference>
<reference key="9">
    <citation type="journal article" date="2007" name="J. Neurosci.">
        <title>FMRFamide-like neuropeptides and mechanosensory touch receptor neurons regulate male sexual turning behavior in Caenorhabditis elegans.</title>
        <authorList>
            <person name="Liu T."/>
            <person name="Kim K."/>
            <person name="Li C."/>
            <person name="Barr M.M."/>
        </authorList>
    </citation>
    <scope>FUNCTION</scope>
    <scope>DISRUPTION PHENOTYPE</scope>
</reference>
<reference key="10">
    <citation type="journal article" date="2014" name="J. Neurosci.">
        <title>Dissecting the signaling mechanisms underlying recognition and preference of food odors.</title>
        <authorList>
            <person name="Harris G."/>
            <person name="Shen Y."/>
            <person name="Ha H."/>
            <person name="Donato A."/>
            <person name="Wallis S."/>
            <person name="Zhang X."/>
            <person name="Zhang Y."/>
        </authorList>
    </citation>
    <scope>FUNCTION</scope>
    <scope>DISRUPTION PHENOTYPE</scope>
</reference>
<reference key="11">
    <citation type="journal article" date="2017" name="Curr. Biol.">
        <title>Sexually Dimorphic Differentiation of a C. elegans Hub Neuron Is Cell Autonomously Controlled by a Conserved Transcription Factor.</title>
        <authorList>
            <person name="Serrano-Saiz E."/>
            <person name="Oren-Suissa M."/>
            <person name="Bayer E.A."/>
            <person name="Hobert O."/>
        </authorList>
    </citation>
    <scope>TISSUE SPECIFICITY</scope>
    <scope>DEVELOPMENTAL STAGE</scope>
</reference>
<accession>P34644</accession>
<accession>Q9TZN7</accession>
<gene>
    <name evidence="13" type="primary">eat-4</name>
    <name evidence="13" type="ORF">ZK512.6</name>
</gene>
<organism>
    <name type="scientific">Caenorhabditis elegans</name>
    <dbReference type="NCBI Taxonomy" id="6239"/>
    <lineage>
        <taxon>Eukaryota</taxon>
        <taxon>Metazoa</taxon>
        <taxon>Ecdysozoa</taxon>
        <taxon>Nematoda</taxon>
        <taxon>Chromadorea</taxon>
        <taxon>Rhabditida</taxon>
        <taxon>Rhabditina</taxon>
        <taxon>Rhabditomorpha</taxon>
        <taxon>Rhabditoidea</taxon>
        <taxon>Rhabditidae</taxon>
        <taxon>Peloderinae</taxon>
        <taxon>Caenorhabditis</taxon>
    </lineage>
</organism>
<name>EAT4_CAEEL</name>
<protein>
    <recommendedName>
        <fullName>Probable vesicular glutamate transporter eat-4</fullName>
    </recommendedName>
    <alternativeName>
        <fullName>Abnormal pharyngeal pumping eat-4</fullName>
    </alternativeName>
</protein>
<feature type="chain" id="PRO_0000220944" description="Probable vesicular glutamate transporter eat-4">
    <location>
        <begin position="1"/>
        <end position="576"/>
    </location>
</feature>
<feature type="topological domain" description="Cytoplasmic" evidence="1">
    <location>
        <begin position="1"/>
        <end position="69"/>
    </location>
</feature>
<feature type="transmembrane region" description="Helical" evidence="1">
    <location>
        <begin position="70"/>
        <end position="90"/>
    </location>
</feature>
<feature type="topological domain" description="Extracellular" evidence="1">
    <location>
        <begin position="91"/>
        <end position="121"/>
    </location>
</feature>
<feature type="transmembrane region" description="Helical" evidence="1">
    <location>
        <begin position="122"/>
        <end position="142"/>
    </location>
</feature>
<feature type="topological domain" description="Cytoplasmic" evidence="1">
    <location>
        <begin position="143"/>
        <end position="150"/>
    </location>
</feature>
<feature type="transmembrane region" description="Helical" evidence="1">
    <location>
        <begin position="151"/>
        <end position="171"/>
    </location>
</feature>
<feature type="topological domain" description="Extracellular" evidence="1">
    <location>
        <begin position="172"/>
        <end position="174"/>
    </location>
</feature>
<feature type="transmembrane region" description="Helical" evidence="1">
    <location>
        <begin position="175"/>
        <end position="195"/>
    </location>
</feature>
<feature type="topological domain" description="Cytoplasmic" evidence="1">
    <location>
        <begin position="196"/>
        <end position="213"/>
    </location>
</feature>
<feature type="transmembrane region" description="Helical" evidence="1">
    <location>
        <begin position="214"/>
        <end position="234"/>
    </location>
</feature>
<feature type="topological domain" description="Extracellular" evidence="1">
    <location>
        <begin position="235"/>
        <end position="239"/>
    </location>
</feature>
<feature type="transmembrane region" description="Helical" evidence="1">
    <location>
        <begin position="240"/>
        <end position="260"/>
    </location>
</feature>
<feature type="topological domain" description="Cytoplasmic" evidence="1">
    <location>
        <begin position="261"/>
        <end position="305"/>
    </location>
</feature>
<feature type="transmembrane region" description="Helical" evidence="1">
    <location>
        <begin position="306"/>
        <end position="325"/>
    </location>
</feature>
<feature type="topological domain" description="Extracellular" evidence="1">
    <location>
        <begin position="326"/>
        <end position="344"/>
    </location>
</feature>
<feature type="transmembrane region" description="Helical" evidence="1">
    <location>
        <begin position="345"/>
        <end position="365"/>
    </location>
</feature>
<feature type="topological domain" description="Cytoplasmic" evidence="1">
    <location>
        <begin position="366"/>
        <end position="381"/>
    </location>
</feature>
<feature type="transmembrane region" description="Helical" evidence="1">
    <location>
        <begin position="382"/>
        <end position="402"/>
    </location>
</feature>
<feature type="topological domain" description="Extracellular" evidence="1">
    <location>
        <begin position="403"/>
        <end position="406"/>
    </location>
</feature>
<feature type="transmembrane region" description="Helical" evidence="1">
    <location>
        <begin position="407"/>
        <end position="427"/>
    </location>
</feature>
<feature type="topological domain" description="Cytoplasmic" evidence="1">
    <location>
        <begin position="428"/>
        <end position="437"/>
    </location>
</feature>
<feature type="transmembrane region" description="Helical" evidence="1">
    <location>
        <begin position="438"/>
        <end position="458"/>
    </location>
</feature>
<feature type="topological domain" description="Extracellular" evidence="1">
    <location>
        <begin position="459"/>
        <end position="471"/>
    </location>
</feature>
<feature type="transmembrane region" description="Helical" evidence="1">
    <location>
        <begin position="472"/>
        <end position="492"/>
    </location>
</feature>
<feature type="topological domain" description="Cytoplasmic" evidence="1">
    <location>
        <begin position="493"/>
        <end position="576"/>
    </location>
</feature>
<feature type="region of interest" description="Disordered" evidence="2">
    <location>
        <begin position="25"/>
        <end position="46"/>
    </location>
</feature>
<feature type="compositionally biased region" description="Polar residues" evidence="2">
    <location>
        <begin position="36"/>
        <end position="46"/>
    </location>
</feature>
<feature type="glycosylation site" description="N-linked (GlcNAc...) asparagine" evidence="1">
    <location>
        <position position="100"/>
    </location>
</feature>
<feature type="glycosylation site" description="N-linked (GlcNAc...) asparagine" evidence="1">
    <location>
        <position position="114"/>
    </location>
</feature>
<sequence length="576" mass="63109">MSSWNEAWDRGKQMVGEPLAKMTAAAASATGAAPPQQMQEEGNENPMQMHSNKVLQVMEQTWIGKCRKRWLLAILANMGFMISFGIRCNFGAAKTHMYKNYTDPYGKVHMHEFNWTIDELSVMESSYFYGYLVTQIPAGFLAAKFPPNKLFGFGIGVGAFLNILLPYGFKVKSDYLVAFIQITQGLVQGVCYPAMHGVWRYWAPPMERSKLATTAFTGSYAGAVLGLPLSAFLVSYVSWAAPFYLYGVCGVIWAILWFCVTFEKPAFHPTISQEEKIFIEDAIGHVSNTHPTIRSIPWKAIVTSKPVWAIIVANFARSWTFYLLLQNQLTYMKEALGMKIADSGLLAAIPHLVMGCVVLMGGQLADYLRSNKILSTTAVRKIFNCGGFGGEAAFMLIVAYTTSDTTAIMALIAAVGMSGFAISGFNVNHLDIAPRYAAILMGFSNGIGTLAGLTCPFVTEAFTAHSKHGWTSVFLLASLIHFTGVTFYAVYASGELQEWAEPKEEEEWSNKELVNKTGINGTGYGAAETTFTQLPAGVDSSYQAQAAPAPGTNPFASAWDEHGSSGVVENPHYQQW</sequence>
<dbReference type="EMBL" id="BX284603">
    <property type="protein sequence ID" value="CAA80150.1"/>
    <property type="molecule type" value="Genomic_DNA"/>
</dbReference>
<dbReference type="EMBL" id="AF095787">
    <property type="protein sequence ID" value="AAC64972.1"/>
    <property type="molecule type" value="mRNA"/>
</dbReference>
<dbReference type="PIR" id="H88548">
    <property type="entry name" value="H88548"/>
</dbReference>
<dbReference type="PIR" id="S40767">
    <property type="entry name" value="S40767"/>
</dbReference>
<dbReference type="PIR" id="T43650">
    <property type="entry name" value="T43650"/>
</dbReference>
<dbReference type="RefSeq" id="NP_499023.3">
    <property type="nucleotide sequence ID" value="NM_066622.4"/>
</dbReference>
<dbReference type="SMR" id="P34644"/>
<dbReference type="FunCoup" id="P34644">
    <property type="interactions" value="474"/>
</dbReference>
<dbReference type="STRING" id="6239.ZK512.6a.1"/>
<dbReference type="TCDB" id="2.A.1.14.42">
    <property type="family name" value="the major facilitator superfamily (mfs)"/>
</dbReference>
<dbReference type="GlyCosmos" id="P34644">
    <property type="glycosylation" value="2 sites, No reported glycans"/>
</dbReference>
<dbReference type="PaxDb" id="6239-ZK512.6a"/>
<dbReference type="PeptideAtlas" id="P34644"/>
<dbReference type="EnsemblMetazoa" id="ZK512.6a.1">
    <property type="protein sequence ID" value="ZK512.6a.1"/>
    <property type="gene ID" value="WBGene00001135"/>
</dbReference>
<dbReference type="GeneID" id="176291"/>
<dbReference type="KEGG" id="cel:CELE_ZK512.6"/>
<dbReference type="UCSC" id="ZK512.6">
    <property type="organism name" value="c. elegans"/>
</dbReference>
<dbReference type="AGR" id="WB:WBGene00001135"/>
<dbReference type="CTD" id="176291"/>
<dbReference type="WormBase" id="ZK512.6a">
    <property type="protein sequence ID" value="CE01109"/>
    <property type="gene ID" value="WBGene00001135"/>
    <property type="gene designation" value="eat-4"/>
</dbReference>
<dbReference type="eggNOG" id="KOG2532">
    <property type="taxonomic scope" value="Eukaryota"/>
</dbReference>
<dbReference type="InParanoid" id="P34644"/>
<dbReference type="OMA" id="YNEQSQM"/>
<dbReference type="OrthoDB" id="2985014at2759"/>
<dbReference type="PhylomeDB" id="P34644"/>
<dbReference type="Reactome" id="R-CEL-210500">
    <property type="pathway name" value="Glutamate Neurotransmitter Release Cycle"/>
</dbReference>
<dbReference type="Reactome" id="R-CEL-428643">
    <property type="pathway name" value="Organic anion transporters"/>
</dbReference>
<dbReference type="PRO" id="PR:P34644"/>
<dbReference type="Proteomes" id="UP000001940">
    <property type="component" value="Chromosome III"/>
</dbReference>
<dbReference type="Bgee" id="WBGene00001135">
    <property type="expression patterns" value="Expressed in larva and 3 other cell types or tissues"/>
</dbReference>
<dbReference type="ExpressionAtlas" id="P34644">
    <property type="expression patterns" value="baseline and differential"/>
</dbReference>
<dbReference type="GO" id="GO:0060076">
    <property type="term" value="C:excitatory synapse"/>
    <property type="evidence" value="ECO:0000318"/>
    <property type="project" value="GO_Central"/>
</dbReference>
<dbReference type="GO" id="GO:0005886">
    <property type="term" value="C:plasma membrane"/>
    <property type="evidence" value="ECO:0007669"/>
    <property type="project" value="UniProtKB-SubCell"/>
</dbReference>
<dbReference type="GO" id="GO:0030672">
    <property type="term" value="C:synaptic vesicle membrane"/>
    <property type="evidence" value="ECO:0000250"/>
    <property type="project" value="WormBase"/>
</dbReference>
<dbReference type="GO" id="GO:0015501">
    <property type="term" value="F:glutamate:sodium symporter activity"/>
    <property type="evidence" value="ECO:0000250"/>
    <property type="project" value="WormBase"/>
</dbReference>
<dbReference type="GO" id="GO:0005313">
    <property type="term" value="F:L-glutamate transmembrane transporter activity"/>
    <property type="evidence" value="ECO:0000318"/>
    <property type="project" value="GO_Central"/>
</dbReference>
<dbReference type="GO" id="GO:0005326">
    <property type="term" value="F:neurotransmitter transmembrane transporter activity"/>
    <property type="evidence" value="ECO:0000318"/>
    <property type="project" value="GO_Central"/>
</dbReference>
<dbReference type="GO" id="GO:0008344">
    <property type="term" value="P:adult locomotory behavior"/>
    <property type="evidence" value="ECO:0000315"/>
    <property type="project" value="UniProtKB"/>
</dbReference>
<dbReference type="GO" id="GO:0006972">
    <property type="term" value="P:hyperosmotic response"/>
    <property type="evidence" value="ECO:0000315"/>
    <property type="project" value="UniProtKB"/>
</dbReference>
<dbReference type="GO" id="GO:0015813">
    <property type="term" value="P:L-glutamate transmembrane transport"/>
    <property type="evidence" value="ECO:0000250"/>
    <property type="project" value="WormBase"/>
</dbReference>
<dbReference type="GO" id="GO:0061096">
    <property type="term" value="P:negative regulation of turning behavior involved in mating"/>
    <property type="evidence" value="ECO:0000315"/>
    <property type="project" value="WormBase"/>
</dbReference>
<dbReference type="GO" id="GO:0098700">
    <property type="term" value="P:neurotransmitter loading into synaptic vesicle"/>
    <property type="evidence" value="ECO:0000318"/>
    <property type="project" value="GO_Central"/>
</dbReference>
<dbReference type="GO" id="GO:1905852">
    <property type="term" value="P:positive regulation of backward locomotion"/>
    <property type="evidence" value="ECO:0000315"/>
    <property type="project" value="UniProtKB"/>
</dbReference>
<dbReference type="GO" id="GO:1902437">
    <property type="term" value="P:positive regulation of male mating behavior"/>
    <property type="evidence" value="ECO:0000315"/>
    <property type="project" value="UniProtKB"/>
</dbReference>
<dbReference type="GO" id="GO:0043051">
    <property type="term" value="P:regulation of nematode pharyngeal pumping"/>
    <property type="evidence" value="ECO:0000315"/>
    <property type="project" value="WormBase"/>
</dbReference>
<dbReference type="GO" id="GO:0050803">
    <property type="term" value="P:regulation of synapse structure or activity"/>
    <property type="evidence" value="ECO:0000318"/>
    <property type="project" value="GO_Central"/>
</dbReference>
<dbReference type="GO" id="GO:0009612">
    <property type="term" value="P:response to mechanical stimulus"/>
    <property type="evidence" value="ECO:0000315"/>
    <property type="project" value="UniProtKB"/>
</dbReference>
<dbReference type="GO" id="GO:0035249">
    <property type="term" value="P:synaptic transmission, glutamatergic"/>
    <property type="evidence" value="ECO:0000315"/>
    <property type="project" value="WormBase"/>
</dbReference>
<dbReference type="CDD" id="cd17382">
    <property type="entry name" value="MFS_SLC17A6_7_8_VGluT"/>
    <property type="match status" value="1"/>
</dbReference>
<dbReference type="FunFam" id="1.20.1250.20:FF:001492">
    <property type="entry name" value="Protein CBG06794"/>
    <property type="match status" value="1"/>
</dbReference>
<dbReference type="FunFam" id="1.20.1250.20:FF:000264">
    <property type="entry name" value="vesicular glutamate transporter 1"/>
    <property type="match status" value="1"/>
</dbReference>
<dbReference type="Gene3D" id="1.20.1250.20">
    <property type="entry name" value="MFS general substrate transporter like domains"/>
    <property type="match status" value="2"/>
</dbReference>
<dbReference type="InterPro" id="IPR011701">
    <property type="entry name" value="MFS"/>
</dbReference>
<dbReference type="InterPro" id="IPR020846">
    <property type="entry name" value="MFS_dom"/>
</dbReference>
<dbReference type="InterPro" id="IPR050382">
    <property type="entry name" value="MFS_Na/Anion_cotransporter"/>
</dbReference>
<dbReference type="InterPro" id="IPR036259">
    <property type="entry name" value="MFS_trans_sf"/>
</dbReference>
<dbReference type="PANTHER" id="PTHR11662">
    <property type="entry name" value="SOLUTE CARRIER FAMILY 17"/>
    <property type="match status" value="1"/>
</dbReference>
<dbReference type="PANTHER" id="PTHR11662:SF456">
    <property type="entry name" value="VESICULAR GLUTAMATE TRANSPORTER, ISOFORM A"/>
    <property type="match status" value="1"/>
</dbReference>
<dbReference type="Pfam" id="PF07690">
    <property type="entry name" value="MFS_1"/>
    <property type="match status" value="1"/>
</dbReference>
<dbReference type="SUPFAM" id="SSF103473">
    <property type="entry name" value="MFS general substrate transporter"/>
    <property type="match status" value="1"/>
</dbReference>
<dbReference type="PROSITE" id="PS50850">
    <property type="entry name" value="MFS"/>
    <property type="match status" value="1"/>
</dbReference>